<evidence type="ECO:0000255" key="1">
    <source>
        <dbReference type="HAMAP-Rule" id="MF_01017"/>
    </source>
</evidence>
<comment type="catalytic activity">
    <reaction evidence="1">
        <text>a quinone + NADH + H(+) = a quinol + NAD(+)</text>
        <dbReference type="Rhea" id="RHEA:46160"/>
        <dbReference type="ChEBI" id="CHEBI:15378"/>
        <dbReference type="ChEBI" id="CHEBI:24646"/>
        <dbReference type="ChEBI" id="CHEBI:57540"/>
        <dbReference type="ChEBI" id="CHEBI:57945"/>
        <dbReference type="ChEBI" id="CHEBI:132124"/>
        <dbReference type="EC" id="1.6.5.2"/>
    </reaction>
</comment>
<comment type="catalytic activity">
    <reaction evidence="1">
        <text>a quinone + NADPH + H(+) = a quinol + NADP(+)</text>
        <dbReference type="Rhea" id="RHEA:46164"/>
        <dbReference type="ChEBI" id="CHEBI:15378"/>
        <dbReference type="ChEBI" id="CHEBI:24646"/>
        <dbReference type="ChEBI" id="CHEBI:57783"/>
        <dbReference type="ChEBI" id="CHEBI:58349"/>
        <dbReference type="ChEBI" id="CHEBI:132124"/>
        <dbReference type="EC" id="1.6.5.2"/>
    </reaction>
</comment>
<comment type="cofactor">
    <cofactor evidence="1">
        <name>FMN</name>
        <dbReference type="ChEBI" id="CHEBI:58210"/>
    </cofactor>
    <text evidence="1">Binds 1 FMN per monomer.</text>
</comment>
<comment type="similarity">
    <text evidence="1">Belongs to the WrbA family.</text>
</comment>
<accession>B5F202</accession>
<protein>
    <recommendedName>
        <fullName evidence="1">NAD(P)H dehydrogenase (quinone)</fullName>
        <ecNumber evidence="1">1.6.5.2</ecNumber>
    </recommendedName>
    <alternativeName>
        <fullName>Flavoprotein WrbA</fullName>
    </alternativeName>
    <alternativeName>
        <fullName evidence="1">NAD(P)H:quinone oxidoreductase</fullName>
        <shortName evidence="1">NQO</shortName>
    </alternativeName>
</protein>
<name>NQOR_SALA4</name>
<gene>
    <name type="ordered locus">SeAg_B1078</name>
</gene>
<reference key="1">
    <citation type="journal article" date="2011" name="J. Bacteriol.">
        <title>Comparative genomics of 28 Salmonella enterica isolates: evidence for CRISPR-mediated adaptive sublineage evolution.</title>
        <authorList>
            <person name="Fricke W.F."/>
            <person name="Mammel M.K."/>
            <person name="McDermott P.F."/>
            <person name="Tartera C."/>
            <person name="White D.G."/>
            <person name="Leclerc J.E."/>
            <person name="Ravel J."/>
            <person name="Cebula T.A."/>
        </authorList>
    </citation>
    <scope>NUCLEOTIDE SEQUENCE [LARGE SCALE GENOMIC DNA]</scope>
    <source>
        <strain>SL483</strain>
    </source>
</reference>
<feature type="chain" id="PRO_1000200640" description="NAD(P)H dehydrogenase (quinone)">
    <location>
        <begin position="1"/>
        <end position="198"/>
    </location>
</feature>
<feature type="domain" description="Flavodoxin-like" evidence="1">
    <location>
        <begin position="4"/>
        <end position="189"/>
    </location>
</feature>
<feature type="binding site" evidence="1">
    <location>
        <begin position="10"/>
        <end position="15"/>
    </location>
    <ligand>
        <name>FMN</name>
        <dbReference type="ChEBI" id="CHEBI:58210"/>
    </ligand>
</feature>
<feature type="binding site" evidence="1">
    <location>
        <position position="12"/>
    </location>
    <ligand>
        <name>NAD(+)</name>
        <dbReference type="ChEBI" id="CHEBI:57540"/>
    </ligand>
</feature>
<feature type="binding site" evidence="1">
    <location>
        <begin position="78"/>
        <end position="80"/>
    </location>
    <ligand>
        <name>FMN</name>
        <dbReference type="ChEBI" id="CHEBI:58210"/>
    </ligand>
</feature>
<feature type="binding site" evidence="1">
    <location>
        <position position="98"/>
    </location>
    <ligand>
        <name>substrate</name>
    </ligand>
</feature>
<feature type="binding site" evidence="1">
    <location>
        <begin position="113"/>
        <end position="118"/>
    </location>
    <ligand>
        <name>FMN</name>
        <dbReference type="ChEBI" id="CHEBI:58210"/>
    </ligand>
</feature>
<feature type="binding site" evidence="1">
    <location>
        <position position="133"/>
    </location>
    <ligand>
        <name>FMN</name>
        <dbReference type="ChEBI" id="CHEBI:58210"/>
    </ligand>
</feature>
<dbReference type="EC" id="1.6.5.2" evidence="1"/>
<dbReference type="EMBL" id="CP001138">
    <property type="protein sequence ID" value="ACH50530.1"/>
    <property type="molecule type" value="Genomic_DNA"/>
</dbReference>
<dbReference type="SMR" id="B5F202"/>
<dbReference type="KEGG" id="sea:SeAg_B1078"/>
<dbReference type="HOGENOM" id="CLU_051402_0_2_6"/>
<dbReference type="Proteomes" id="UP000008819">
    <property type="component" value="Chromosome"/>
</dbReference>
<dbReference type="GO" id="GO:0016020">
    <property type="term" value="C:membrane"/>
    <property type="evidence" value="ECO:0007669"/>
    <property type="project" value="TreeGrafter"/>
</dbReference>
<dbReference type="GO" id="GO:0050660">
    <property type="term" value="F:flavin adenine dinucleotide binding"/>
    <property type="evidence" value="ECO:0007669"/>
    <property type="project" value="UniProtKB-UniRule"/>
</dbReference>
<dbReference type="GO" id="GO:0010181">
    <property type="term" value="F:FMN binding"/>
    <property type="evidence" value="ECO:0007669"/>
    <property type="project" value="InterPro"/>
</dbReference>
<dbReference type="GO" id="GO:0051287">
    <property type="term" value="F:NAD binding"/>
    <property type="evidence" value="ECO:0007669"/>
    <property type="project" value="UniProtKB-UniRule"/>
</dbReference>
<dbReference type="GO" id="GO:0050136">
    <property type="term" value="F:NADH:ubiquinone reductase (non-electrogenic) activity"/>
    <property type="evidence" value="ECO:0007669"/>
    <property type="project" value="RHEA"/>
</dbReference>
<dbReference type="GO" id="GO:0050661">
    <property type="term" value="F:NADP binding"/>
    <property type="evidence" value="ECO:0007669"/>
    <property type="project" value="UniProtKB-UniRule"/>
</dbReference>
<dbReference type="GO" id="GO:0008753">
    <property type="term" value="F:NADPH dehydrogenase (quinone) activity"/>
    <property type="evidence" value="ECO:0007669"/>
    <property type="project" value="RHEA"/>
</dbReference>
<dbReference type="FunFam" id="3.40.50.360:FF:000004">
    <property type="entry name" value="NAD(P)H dehydrogenase (quinone)"/>
    <property type="match status" value="1"/>
</dbReference>
<dbReference type="Gene3D" id="3.40.50.360">
    <property type="match status" value="1"/>
</dbReference>
<dbReference type="HAMAP" id="MF_01017">
    <property type="entry name" value="NQOR"/>
    <property type="match status" value="1"/>
</dbReference>
<dbReference type="InterPro" id="IPR008254">
    <property type="entry name" value="Flavodoxin/NO_synth"/>
</dbReference>
<dbReference type="InterPro" id="IPR029039">
    <property type="entry name" value="Flavoprotein-like_sf"/>
</dbReference>
<dbReference type="InterPro" id="IPR010089">
    <property type="entry name" value="Flavoprotein_WrbA-like"/>
</dbReference>
<dbReference type="InterPro" id="IPR005025">
    <property type="entry name" value="FMN_Rdtase-like_dom"/>
</dbReference>
<dbReference type="InterPro" id="IPR037513">
    <property type="entry name" value="NQO"/>
</dbReference>
<dbReference type="NCBIfam" id="TIGR01755">
    <property type="entry name" value="flav_wrbA"/>
    <property type="match status" value="1"/>
</dbReference>
<dbReference type="NCBIfam" id="NF002999">
    <property type="entry name" value="PRK03767.1"/>
    <property type="match status" value="1"/>
</dbReference>
<dbReference type="PANTHER" id="PTHR30546">
    <property type="entry name" value="FLAVODOXIN-RELATED PROTEIN WRBA-RELATED"/>
    <property type="match status" value="1"/>
</dbReference>
<dbReference type="PANTHER" id="PTHR30546:SF23">
    <property type="entry name" value="FLAVOPROTEIN-LIKE PROTEIN YCP4-RELATED"/>
    <property type="match status" value="1"/>
</dbReference>
<dbReference type="Pfam" id="PF03358">
    <property type="entry name" value="FMN_red"/>
    <property type="match status" value="1"/>
</dbReference>
<dbReference type="SUPFAM" id="SSF52218">
    <property type="entry name" value="Flavoproteins"/>
    <property type="match status" value="1"/>
</dbReference>
<dbReference type="PROSITE" id="PS50902">
    <property type="entry name" value="FLAVODOXIN_LIKE"/>
    <property type="match status" value="1"/>
</dbReference>
<proteinExistence type="inferred from homology"/>
<keyword id="KW-0285">Flavoprotein</keyword>
<keyword id="KW-0288">FMN</keyword>
<keyword id="KW-0520">NAD</keyword>
<keyword id="KW-0521">NADP</keyword>
<keyword id="KW-0547">Nucleotide-binding</keyword>
<keyword id="KW-0560">Oxidoreductase</keyword>
<sequence>MAKILVLYYSMYGHIETMAHAVAEGAKKVDGAEVIIKRVPETMPPEIFAKAGGKTQNAPVATPQELADYDAIIFGTPTRFGNMSGQMRTFLDQTGGLWASGALYGKLGSVFSSTGTGGGQEQTITSTWTTLAHHGMVIVPIGYAAQELFDVSQVRGGTPYGATTIAGGDGSRQPSQEELSIARYQGEYVAGLAVKLNG</sequence>
<organism>
    <name type="scientific">Salmonella agona (strain SL483)</name>
    <dbReference type="NCBI Taxonomy" id="454166"/>
    <lineage>
        <taxon>Bacteria</taxon>
        <taxon>Pseudomonadati</taxon>
        <taxon>Pseudomonadota</taxon>
        <taxon>Gammaproteobacteria</taxon>
        <taxon>Enterobacterales</taxon>
        <taxon>Enterobacteriaceae</taxon>
        <taxon>Salmonella</taxon>
    </lineage>
</organism>